<proteinExistence type="inferred from homology"/>
<keyword id="KW-0687">Ribonucleoprotein</keyword>
<keyword id="KW-0689">Ribosomal protein</keyword>
<keyword id="KW-0694">RNA-binding</keyword>
<keyword id="KW-0699">rRNA-binding</keyword>
<protein>
    <recommendedName>
        <fullName evidence="1">Large ribosomal subunit protein bL21</fullName>
    </recommendedName>
    <alternativeName>
        <fullName evidence="2">50S ribosomal protein L21</fullName>
    </alternativeName>
</protein>
<evidence type="ECO:0000255" key="1">
    <source>
        <dbReference type="HAMAP-Rule" id="MF_01363"/>
    </source>
</evidence>
<evidence type="ECO:0000305" key="2"/>
<sequence>MYAVFQSGGKQHRVSEGQTLRLEKLDVETGATVEFDKVLLVANGEDIKVGAPLVEGGKVVAEVVQHGRGDKVKIVKFRRRKHSRKQQGHRQWFTEVKITGINA</sequence>
<organism>
    <name type="scientific">Vibrio cholerae serotype O1 (strain M66-2)</name>
    <dbReference type="NCBI Taxonomy" id="579112"/>
    <lineage>
        <taxon>Bacteria</taxon>
        <taxon>Pseudomonadati</taxon>
        <taxon>Pseudomonadota</taxon>
        <taxon>Gammaproteobacteria</taxon>
        <taxon>Vibrionales</taxon>
        <taxon>Vibrionaceae</taxon>
        <taxon>Vibrio</taxon>
    </lineage>
</organism>
<name>RL21_VIBCM</name>
<dbReference type="EMBL" id="CP001233">
    <property type="protein sequence ID" value="ACP04746.1"/>
    <property type="molecule type" value="Genomic_DNA"/>
</dbReference>
<dbReference type="RefSeq" id="WP_000271393.1">
    <property type="nucleotide sequence ID" value="NC_012578.1"/>
</dbReference>
<dbReference type="SMR" id="C3LRG6"/>
<dbReference type="GeneID" id="95679033"/>
<dbReference type="KEGG" id="vcm:VCM66_0420"/>
<dbReference type="HOGENOM" id="CLU_061463_3_3_6"/>
<dbReference type="Proteomes" id="UP000001217">
    <property type="component" value="Chromosome I"/>
</dbReference>
<dbReference type="GO" id="GO:0005737">
    <property type="term" value="C:cytoplasm"/>
    <property type="evidence" value="ECO:0007669"/>
    <property type="project" value="UniProtKB-ARBA"/>
</dbReference>
<dbReference type="GO" id="GO:1990904">
    <property type="term" value="C:ribonucleoprotein complex"/>
    <property type="evidence" value="ECO:0007669"/>
    <property type="project" value="UniProtKB-KW"/>
</dbReference>
<dbReference type="GO" id="GO:0005840">
    <property type="term" value="C:ribosome"/>
    <property type="evidence" value="ECO:0007669"/>
    <property type="project" value="UniProtKB-KW"/>
</dbReference>
<dbReference type="GO" id="GO:0019843">
    <property type="term" value="F:rRNA binding"/>
    <property type="evidence" value="ECO:0007669"/>
    <property type="project" value="UniProtKB-UniRule"/>
</dbReference>
<dbReference type="GO" id="GO:0003735">
    <property type="term" value="F:structural constituent of ribosome"/>
    <property type="evidence" value="ECO:0007669"/>
    <property type="project" value="InterPro"/>
</dbReference>
<dbReference type="GO" id="GO:0006412">
    <property type="term" value="P:translation"/>
    <property type="evidence" value="ECO:0007669"/>
    <property type="project" value="UniProtKB-UniRule"/>
</dbReference>
<dbReference type="HAMAP" id="MF_01363">
    <property type="entry name" value="Ribosomal_bL21"/>
    <property type="match status" value="1"/>
</dbReference>
<dbReference type="InterPro" id="IPR028909">
    <property type="entry name" value="bL21-like"/>
</dbReference>
<dbReference type="InterPro" id="IPR036164">
    <property type="entry name" value="bL21-like_sf"/>
</dbReference>
<dbReference type="InterPro" id="IPR001787">
    <property type="entry name" value="Ribosomal_bL21"/>
</dbReference>
<dbReference type="InterPro" id="IPR018258">
    <property type="entry name" value="Ribosomal_bL21_CS"/>
</dbReference>
<dbReference type="NCBIfam" id="TIGR00061">
    <property type="entry name" value="L21"/>
    <property type="match status" value="1"/>
</dbReference>
<dbReference type="PANTHER" id="PTHR21349">
    <property type="entry name" value="50S RIBOSOMAL PROTEIN L21"/>
    <property type="match status" value="1"/>
</dbReference>
<dbReference type="PANTHER" id="PTHR21349:SF0">
    <property type="entry name" value="LARGE RIBOSOMAL SUBUNIT PROTEIN BL21M"/>
    <property type="match status" value="1"/>
</dbReference>
<dbReference type="Pfam" id="PF00829">
    <property type="entry name" value="Ribosomal_L21p"/>
    <property type="match status" value="1"/>
</dbReference>
<dbReference type="SUPFAM" id="SSF141091">
    <property type="entry name" value="L21p-like"/>
    <property type="match status" value="1"/>
</dbReference>
<dbReference type="PROSITE" id="PS01169">
    <property type="entry name" value="RIBOSOMAL_L21"/>
    <property type="match status" value="1"/>
</dbReference>
<accession>C3LRG6</accession>
<comment type="function">
    <text evidence="1">This protein binds to 23S rRNA in the presence of protein L20.</text>
</comment>
<comment type="subunit">
    <text evidence="1">Part of the 50S ribosomal subunit. Contacts protein L20.</text>
</comment>
<comment type="similarity">
    <text evidence="1">Belongs to the bacterial ribosomal protein bL21 family.</text>
</comment>
<feature type="chain" id="PRO_1000166750" description="Large ribosomal subunit protein bL21">
    <location>
        <begin position="1"/>
        <end position="103"/>
    </location>
</feature>
<reference key="1">
    <citation type="journal article" date="2008" name="PLoS ONE">
        <title>A recalibrated molecular clock and independent origins for the cholera pandemic clones.</title>
        <authorList>
            <person name="Feng L."/>
            <person name="Reeves P.R."/>
            <person name="Lan R."/>
            <person name="Ren Y."/>
            <person name="Gao C."/>
            <person name="Zhou Z."/>
            <person name="Ren Y."/>
            <person name="Cheng J."/>
            <person name="Wang W."/>
            <person name="Wang J."/>
            <person name="Qian W."/>
            <person name="Li D."/>
            <person name="Wang L."/>
        </authorList>
    </citation>
    <scope>NUCLEOTIDE SEQUENCE [LARGE SCALE GENOMIC DNA]</scope>
    <source>
        <strain>M66-2</strain>
    </source>
</reference>
<gene>
    <name evidence="1" type="primary">rplU</name>
    <name type="ordered locus">VCM66_0420</name>
</gene>